<name>DGTP_YERPP</name>
<feature type="chain" id="PRO_1000006557" description="Deoxyguanosinetriphosphate triphosphohydrolase">
    <location>
        <begin position="1"/>
        <end position="506"/>
    </location>
</feature>
<feature type="domain" description="HD" evidence="2">
    <location>
        <begin position="66"/>
        <end position="274"/>
    </location>
</feature>
<evidence type="ECO:0000255" key="1">
    <source>
        <dbReference type="HAMAP-Rule" id="MF_00030"/>
    </source>
</evidence>
<evidence type="ECO:0000255" key="2">
    <source>
        <dbReference type="PROSITE-ProRule" id="PRU01175"/>
    </source>
</evidence>
<proteinExistence type="inferred from homology"/>
<sequence>MSGIDFKQKISFQRPFSKPSSAEDEYEITRVFESDRGRIVNSAAIRRLQQKTQVFPLERNAAVRSRLTHSLEVQQVGRYIAKEILNRFKQDKKITAYGLDKLLDPFESIVEMACLMHDIGNPPFGHFGESAINDWFTKRMDPNGGSGSEPQSTDQCQVDVLKLCEGETELNILRSKIRHDLSQFEGNAQAIRLVHSLLKLNLTYAQVGCILKYTKPAYWSAPIPASHNYLMKKPGFYLAEENYVKELRRELNMEEFDRFPLTYIMEAADDISYCIADLEDAVEKNIFSVEQLYDHMSQEWGAVTPGDLFDKVVGAAFRQLGREQGRRSSEDQFFMYLRVNTVGKLVPHAAQRFIENLPAVFSGSFNQALLEDSSAACKLLQIFKRVAVKHVFNHPEVEQLELQGYRVISGLLDIYSPLLAMPETAFTQLVADDRHRKYPIETRLFHKLSIKHRLAYAESAERIRNLPSEQYEIYEYYYRARLIQDYISGMTDLYAYDEYRRLMAAE</sequence>
<reference key="1">
    <citation type="submission" date="2007-02" db="EMBL/GenBank/DDBJ databases">
        <title>Complete sequence of chromosome of Yersinia pestis Pestoides F.</title>
        <authorList>
            <consortium name="US DOE Joint Genome Institute"/>
            <person name="Copeland A."/>
            <person name="Lucas S."/>
            <person name="Lapidus A."/>
            <person name="Barry K."/>
            <person name="Detter J.C."/>
            <person name="Glavina del Rio T."/>
            <person name="Hammon N."/>
            <person name="Israni S."/>
            <person name="Dalin E."/>
            <person name="Tice H."/>
            <person name="Pitluck S."/>
            <person name="Di Bartolo G."/>
            <person name="Chain P."/>
            <person name="Malfatti S."/>
            <person name="Shin M."/>
            <person name="Vergez L."/>
            <person name="Schmutz J."/>
            <person name="Larimer F."/>
            <person name="Land M."/>
            <person name="Hauser L."/>
            <person name="Worsham P."/>
            <person name="Chu M."/>
            <person name="Bearden S."/>
            <person name="Garcia E."/>
            <person name="Richardson P."/>
        </authorList>
    </citation>
    <scope>NUCLEOTIDE SEQUENCE [LARGE SCALE GENOMIC DNA]</scope>
    <source>
        <strain>Pestoides F</strain>
    </source>
</reference>
<accession>A4TPX3</accession>
<organism>
    <name type="scientific">Yersinia pestis (strain Pestoides F)</name>
    <dbReference type="NCBI Taxonomy" id="386656"/>
    <lineage>
        <taxon>Bacteria</taxon>
        <taxon>Pseudomonadati</taxon>
        <taxon>Pseudomonadota</taxon>
        <taxon>Gammaproteobacteria</taxon>
        <taxon>Enterobacterales</taxon>
        <taxon>Yersiniaceae</taxon>
        <taxon>Yersinia</taxon>
    </lineage>
</organism>
<comment type="function">
    <text evidence="1">dGTPase preferentially hydrolyzes dGTP over the other canonical NTPs.</text>
</comment>
<comment type="catalytic activity">
    <reaction evidence="1">
        <text>dGTP + H2O = 2'-deoxyguanosine + triphosphate + H(+)</text>
        <dbReference type="Rhea" id="RHEA:15193"/>
        <dbReference type="ChEBI" id="CHEBI:15377"/>
        <dbReference type="ChEBI" id="CHEBI:15378"/>
        <dbReference type="ChEBI" id="CHEBI:17172"/>
        <dbReference type="ChEBI" id="CHEBI:18036"/>
        <dbReference type="ChEBI" id="CHEBI:61429"/>
        <dbReference type="EC" id="3.1.5.1"/>
    </reaction>
</comment>
<comment type="cofactor">
    <cofactor evidence="1">
        <name>Mg(2+)</name>
        <dbReference type="ChEBI" id="CHEBI:18420"/>
    </cofactor>
</comment>
<comment type="subunit">
    <text evidence="1">Homotetramer.</text>
</comment>
<comment type="similarity">
    <text evidence="1">Belongs to the dGTPase family. Type 1 subfamily.</text>
</comment>
<protein>
    <recommendedName>
        <fullName evidence="1">Deoxyguanosinetriphosphate triphosphohydrolase</fullName>
        <shortName evidence="1">dGTP triphosphohydrolase</shortName>
        <shortName evidence="1">dGTPase</shortName>
        <ecNumber evidence="1">3.1.5.1</ecNumber>
    </recommendedName>
</protein>
<dbReference type="EC" id="3.1.5.1" evidence="1"/>
<dbReference type="EMBL" id="CP000668">
    <property type="protein sequence ID" value="ABP41335.1"/>
    <property type="molecule type" value="Genomic_DNA"/>
</dbReference>
<dbReference type="RefSeq" id="WP_002209369.1">
    <property type="nucleotide sequence ID" value="NZ_CP009715.1"/>
</dbReference>
<dbReference type="SMR" id="A4TPX3"/>
<dbReference type="GeneID" id="57975326"/>
<dbReference type="KEGG" id="ypp:YPDSF_2975"/>
<dbReference type="PATRIC" id="fig|386656.14.peg.1390"/>
<dbReference type="GO" id="GO:0008832">
    <property type="term" value="F:dGTPase activity"/>
    <property type="evidence" value="ECO:0007669"/>
    <property type="project" value="UniProtKB-UniRule"/>
</dbReference>
<dbReference type="GO" id="GO:0000287">
    <property type="term" value="F:magnesium ion binding"/>
    <property type="evidence" value="ECO:0007669"/>
    <property type="project" value="UniProtKB-UniRule"/>
</dbReference>
<dbReference type="GO" id="GO:0006203">
    <property type="term" value="P:dGTP catabolic process"/>
    <property type="evidence" value="ECO:0007669"/>
    <property type="project" value="InterPro"/>
</dbReference>
<dbReference type="CDD" id="cd00077">
    <property type="entry name" value="HDc"/>
    <property type="match status" value="1"/>
</dbReference>
<dbReference type="FunFam" id="1.10.3210.10:FF:000009">
    <property type="entry name" value="Deoxyguanosinetriphosphate triphosphohydrolase"/>
    <property type="match status" value="1"/>
</dbReference>
<dbReference type="FunFam" id="1.10.3210.10:FF:000010">
    <property type="entry name" value="Deoxyguanosinetriphosphate triphosphohydrolase"/>
    <property type="match status" value="1"/>
</dbReference>
<dbReference type="FunFam" id="1.10.3410.10:FF:000001">
    <property type="entry name" value="Deoxyguanosinetriphosphate triphosphohydrolase"/>
    <property type="match status" value="1"/>
</dbReference>
<dbReference type="Gene3D" id="1.10.3210.10">
    <property type="entry name" value="Hypothetical protein af1432"/>
    <property type="match status" value="2"/>
</dbReference>
<dbReference type="Gene3D" id="1.10.3410.10">
    <property type="entry name" value="putative deoxyguanosinetriphosphate triphosphohydrolase like domain"/>
    <property type="match status" value="1"/>
</dbReference>
<dbReference type="HAMAP" id="MF_00030">
    <property type="entry name" value="dGTPase_type1"/>
    <property type="match status" value="1"/>
</dbReference>
<dbReference type="InterPro" id="IPR023293">
    <property type="entry name" value="dGTP_triP_hydro_central_sf"/>
</dbReference>
<dbReference type="InterPro" id="IPR006261">
    <property type="entry name" value="dGTPase"/>
</dbReference>
<dbReference type="InterPro" id="IPR050135">
    <property type="entry name" value="dGTPase-like"/>
</dbReference>
<dbReference type="InterPro" id="IPR020779">
    <property type="entry name" value="dNTPase_1"/>
</dbReference>
<dbReference type="InterPro" id="IPR003607">
    <property type="entry name" value="HD/PDEase_dom"/>
</dbReference>
<dbReference type="InterPro" id="IPR006674">
    <property type="entry name" value="HD_domain"/>
</dbReference>
<dbReference type="InterPro" id="IPR026875">
    <property type="entry name" value="PHydrolase_assoc_dom"/>
</dbReference>
<dbReference type="NCBIfam" id="TIGR01353">
    <property type="entry name" value="dGTP_triPase"/>
    <property type="match status" value="1"/>
</dbReference>
<dbReference type="NCBIfam" id="NF003429">
    <property type="entry name" value="PRK04926.1"/>
    <property type="match status" value="1"/>
</dbReference>
<dbReference type="PANTHER" id="PTHR11373:SF32">
    <property type="entry name" value="DEOXYGUANOSINETRIPHOSPHATE TRIPHOSPHOHYDROLASE"/>
    <property type="match status" value="1"/>
</dbReference>
<dbReference type="PANTHER" id="PTHR11373">
    <property type="entry name" value="DEOXYNUCLEOSIDE TRIPHOSPHATE TRIPHOSPHOHYDROLASE"/>
    <property type="match status" value="1"/>
</dbReference>
<dbReference type="Pfam" id="PF01966">
    <property type="entry name" value="HD"/>
    <property type="match status" value="1"/>
</dbReference>
<dbReference type="Pfam" id="PF13286">
    <property type="entry name" value="HD_assoc"/>
    <property type="match status" value="1"/>
</dbReference>
<dbReference type="SMART" id="SM00471">
    <property type="entry name" value="HDc"/>
    <property type="match status" value="1"/>
</dbReference>
<dbReference type="SUPFAM" id="SSF109604">
    <property type="entry name" value="HD-domain/PDEase-like"/>
    <property type="match status" value="1"/>
</dbReference>
<dbReference type="PROSITE" id="PS51831">
    <property type="entry name" value="HD"/>
    <property type="match status" value="1"/>
</dbReference>
<gene>
    <name evidence="1" type="primary">dgt</name>
    <name type="ordered locus">YPDSF_2975</name>
</gene>
<keyword id="KW-0378">Hydrolase</keyword>
<keyword id="KW-0460">Magnesium</keyword>